<feature type="chain" id="PRO_0000178112" description="Apolipoprotein N-acyltransferase">
    <location>
        <begin position="1"/>
        <end position="414"/>
    </location>
</feature>
<feature type="transmembrane region" description="Helical" evidence="1">
    <location>
        <begin position="19"/>
        <end position="39"/>
    </location>
</feature>
<feature type="transmembrane region" description="Helical" evidence="1">
    <location>
        <begin position="40"/>
        <end position="60"/>
    </location>
</feature>
<feature type="transmembrane region" description="Helical" evidence="1">
    <location>
        <begin position="63"/>
        <end position="83"/>
    </location>
</feature>
<feature type="transmembrane region" description="Helical" evidence="1">
    <location>
        <begin position="91"/>
        <end position="111"/>
    </location>
</feature>
<feature type="transmembrane region" description="Helical" evidence="1">
    <location>
        <begin position="121"/>
        <end position="141"/>
    </location>
</feature>
<feature type="transmembrane region" description="Helical" evidence="1">
    <location>
        <begin position="153"/>
        <end position="173"/>
    </location>
</feature>
<feature type="domain" description="CN hydrolase" evidence="1">
    <location>
        <begin position="202"/>
        <end position="414"/>
    </location>
</feature>
<feature type="active site" description="Proton acceptor" evidence="1">
    <location>
        <position position="243"/>
    </location>
</feature>
<feature type="active site" evidence="1">
    <location>
        <position position="298"/>
    </location>
</feature>
<feature type="active site" description="Nucleophile" evidence="1">
    <location>
        <position position="351"/>
    </location>
</feature>
<sequence>MKFRSILAIFGDFRPKSLGIALFGAILFSLFIYLHHFGITSPLLYSLLALLALAFYLKLPRESGFAFGFWVGIAWFYWMALSFRYYELTYLIPFILLGIGGVYGVLFSMALYLKNPLVRALLLWLLSHVQPFGFDWMVPEVMLVPSLLDSSKLSFGLILLSLSLFWLLPQRWLKPLPLLLLPFTLYSKPFSPSLPPFEVEIIETHIPQEIRWEREARARIIEENLKRIDAAILEGKALILFPETAFPLLLNKEDWVLEHLAQKSQEIAIITGALRAEEGEIYNSTYFFHQGRIEVADKIVLVPFGEKIPLPDFLVKPLNRLFFGGAQDYRASASKPVDFELHGVKLRNAICYEATSAILYEGSPQFMVVGSNNAWFYPSIEPALQRLLLGYYAREHRTTILHAANRSPSGIIAP</sequence>
<protein>
    <recommendedName>
        <fullName evidence="1">Apolipoprotein N-acyltransferase</fullName>
        <shortName evidence="1">ALP N-acyltransferase</shortName>
        <ecNumber evidence="1">2.3.1.269</ecNumber>
    </recommendedName>
</protein>
<comment type="function">
    <text evidence="1">Catalyzes the phospholipid dependent N-acylation of the N-terminal cysteine of apolipoprotein, the last step in lipoprotein maturation.</text>
</comment>
<comment type="catalytic activity">
    <reaction evidence="1">
        <text>N-terminal S-1,2-diacyl-sn-glyceryl-L-cysteinyl-[lipoprotein] + a glycerophospholipid = N-acyl-S-1,2-diacyl-sn-glyceryl-L-cysteinyl-[lipoprotein] + a 2-acyl-sn-glycero-3-phospholipid + H(+)</text>
        <dbReference type="Rhea" id="RHEA:48228"/>
        <dbReference type="Rhea" id="RHEA-COMP:14681"/>
        <dbReference type="Rhea" id="RHEA-COMP:14684"/>
        <dbReference type="ChEBI" id="CHEBI:15378"/>
        <dbReference type="ChEBI" id="CHEBI:136912"/>
        <dbReference type="ChEBI" id="CHEBI:140656"/>
        <dbReference type="ChEBI" id="CHEBI:140657"/>
        <dbReference type="ChEBI" id="CHEBI:140660"/>
        <dbReference type="EC" id="2.3.1.269"/>
    </reaction>
</comment>
<comment type="pathway">
    <text evidence="1">Protein modification; lipoprotein biosynthesis (N-acyl transfer).</text>
</comment>
<comment type="subcellular location">
    <subcellularLocation>
        <location evidence="1">Cell inner membrane</location>
        <topology evidence="1">Multi-pass membrane protein</topology>
    </subcellularLocation>
</comment>
<comment type="similarity">
    <text evidence="1">Belongs to the CN hydrolase family. Apolipoprotein N-acyltransferase subfamily.</text>
</comment>
<proteinExistence type="inferred from homology"/>
<keyword id="KW-0012">Acyltransferase</keyword>
<keyword id="KW-0997">Cell inner membrane</keyword>
<keyword id="KW-1003">Cell membrane</keyword>
<keyword id="KW-0472">Membrane</keyword>
<keyword id="KW-1185">Reference proteome</keyword>
<keyword id="KW-0808">Transferase</keyword>
<keyword id="KW-0812">Transmembrane</keyword>
<keyword id="KW-1133">Transmembrane helix</keyword>
<organism>
    <name type="scientific">Wolinella succinogenes (strain ATCC 29543 / DSM 1740 / CCUG 13145 / JCM 31913 / LMG 7466 / NCTC 11488 / FDC 602W)</name>
    <name type="common">Vibrio succinogenes</name>
    <dbReference type="NCBI Taxonomy" id="273121"/>
    <lineage>
        <taxon>Bacteria</taxon>
        <taxon>Pseudomonadati</taxon>
        <taxon>Campylobacterota</taxon>
        <taxon>Epsilonproteobacteria</taxon>
        <taxon>Campylobacterales</taxon>
        <taxon>Helicobacteraceae</taxon>
        <taxon>Wolinella</taxon>
    </lineage>
</organism>
<gene>
    <name evidence="1" type="primary">lnt</name>
    <name type="ordered locus">WS0080</name>
</gene>
<name>LNT_WOLSU</name>
<reference key="1">
    <citation type="journal article" date="2003" name="Proc. Natl. Acad. Sci. U.S.A.">
        <title>Complete genome sequence and analysis of Wolinella succinogenes.</title>
        <authorList>
            <person name="Baar C."/>
            <person name="Eppinger M."/>
            <person name="Raddatz G."/>
            <person name="Simon J."/>
            <person name="Lanz C."/>
            <person name="Klimmek O."/>
            <person name="Nandakumar R."/>
            <person name="Gross R."/>
            <person name="Rosinus A."/>
            <person name="Keller H."/>
            <person name="Jagtap P."/>
            <person name="Linke B."/>
            <person name="Meyer F."/>
            <person name="Lederer H."/>
            <person name="Schuster S.C."/>
        </authorList>
    </citation>
    <scope>NUCLEOTIDE SEQUENCE [LARGE SCALE GENOMIC DNA]</scope>
    <source>
        <strain>ATCC 29543 / DSM 1740 / CCUG 13145 / JCM 31913 / LMG 7466 / NCTC 11488 / FDC 602W</strain>
    </source>
</reference>
<accession>Q7MAR3</accession>
<evidence type="ECO:0000255" key="1">
    <source>
        <dbReference type="HAMAP-Rule" id="MF_01148"/>
    </source>
</evidence>
<dbReference type="EC" id="2.3.1.269" evidence="1"/>
<dbReference type="EMBL" id="BX571657">
    <property type="protein sequence ID" value="CAE09249.1"/>
    <property type="molecule type" value="Genomic_DNA"/>
</dbReference>
<dbReference type="RefSeq" id="WP_011138049.1">
    <property type="nucleotide sequence ID" value="NC_005090.1"/>
</dbReference>
<dbReference type="SMR" id="Q7MAR3"/>
<dbReference type="STRING" id="273121.WS0080"/>
<dbReference type="KEGG" id="wsu:WS0080"/>
<dbReference type="eggNOG" id="COG0815">
    <property type="taxonomic scope" value="Bacteria"/>
</dbReference>
<dbReference type="HOGENOM" id="CLU_050649_0_0_7"/>
<dbReference type="UniPathway" id="UPA00666"/>
<dbReference type="Proteomes" id="UP000000422">
    <property type="component" value="Chromosome"/>
</dbReference>
<dbReference type="GO" id="GO:0005886">
    <property type="term" value="C:plasma membrane"/>
    <property type="evidence" value="ECO:0007669"/>
    <property type="project" value="UniProtKB-SubCell"/>
</dbReference>
<dbReference type="GO" id="GO:0016410">
    <property type="term" value="F:N-acyltransferase activity"/>
    <property type="evidence" value="ECO:0007669"/>
    <property type="project" value="UniProtKB-UniRule"/>
</dbReference>
<dbReference type="GO" id="GO:0042158">
    <property type="term" value="P:lipoprotein biosynthetic process"/>
    <property type="evidence" value="ECO:0007669"/>
    <property type="project" value="UniProtKB-UniRule"/>
</dbReference>
<dbReference type="Gene3D" id="3.60.110.10">
    <property type="entry name" value="Carbon-nitrogen hydrolase"/>
    <property type="match status" value="1"/>
</dbReference>
<dbReference type="HAMAP" id="MF_01148">
    <property type="entry name" value="Lnt"/>
    <property type="match status" value="1"/>
</dbReference>
<dbReference type="InterPro" id="IPR004563">
    <property type="entry name" value="Apolipo_AcylTrfase"/>
</dbReference>
<dbReference type="InterPro" id="IPR003010">
    <property type="entry name" value="C-N_Hydrolase"/>
</dbReference>
<dbReference type="InterPro" id="IPR036526">
    <property type="entry name" value="C-N_Hydrolase_sf"/>
</dbReference>
<dbReference type="NCBIfam" id="TIGR00546">
    <property type="entry name" value="lnt"/>
    <property type="match status" value="1"/>
</dbReference>
<dbReference type="NCBIfam" id="NF008934">
    <property type="entry name" value="PRK12291.1"/>
    <property type="match status" value="1"/>
</dbReference>
<dbReference type="PANTHER" id="PTHR38686">
    <property type="entry name" value="APOLIPOPROTEIN N-ACYLTRANSFERASE"/>
    <property type="match status" value="1"/>
</dbReference>
<dbReference type="PANTHER" id="PTHR38686:SF1">
    <property type="entry name" value="APOLIPOPROTEIN N-ACYLTRANSFERASE"/>
    <property type="match status" value="1"/>
</dbReference>
<dbReference type="SUPFAM" id="SSF56317">
    <property type="entry name" value="Carbon-nitrogen hydrolase"/>
    <property type="match status" value="1"/>
</dbReference>
<dbReference type="PROSITE" id="PS50263">
    <property type="entry name" value="CN_HYDROLASE"/>
    <property type="match status" value="1"/>
</dbReference>